<gene>
    <name evidence="1" type="primary">rpmE</name>
    <name type="ordered locus">Csal_0604</name>
</gene>
<organism>
    <name type="scientific">Chromohalobacter salexigens (strain ATCC BAA-138 / DSM 3043 / CIP 106854 / NCIMB 13768 / 1H11)</name>
    <dbReference type="NCBI Taxonomy" id="290398"/>
    <lineage>
        <taxon>Bacteria</taxon>
        <taxon>Pseudomonadati</taxon>
        <taxon>Pseudomonadota</taxon>
        <taxon>Gammaproteobacteria</taxon>
        <taxon>Oceanospirillales</taxon>
        <taxon>Halomonadaceae</taxon>
        <taxon>Chromohalobacter</taxon>
    </lineage>
</organism>
<reference key="1">
    <citation type="journal article" date="2011" name="Stand. Genomic Sci.">
        <title>Complete genome sequence of the halophilic and highly halotolerant Chromohalobacter salexigens type strain (1H11(T)).</title>
        <authorList>
            <person name="Copeland A."/>
            <person name="O'Connor K."/>
            <person name="Lucas S."/>
            <person name="Lapidus A."/>
            <person name="Berry K.W."/>
            <person name="Detter J.C."/>
            <person name="Del Rio T.G."/>
            <person name="Hammon N."/>
            <person name="Dalin E."/>
            <person name="Tice H."/>
            <person name="Pitluck S."/>
            <person name="Bruce D."/>
            <person name="Goodwin L."/>
            <person name="Han C."/>
            <person name="Tapia R."/>
            <person name="Saunders E."/>
            <person name="Schmutz J."/>
            <person name="Brettin T."/>
            <person name="Larimer F."/>
            <person name="Land M."/>
            <person name="Hauser L."/>
            <person name="Vargas C."/>
            <person name="Nieto J.J."/>
            <person name="Kyrpides N.C."/>
            <person name="Ivanova N."/>
            <person name="Goker M."/>
            <person name="Klenk H.P."/>
            <person name="Csonka L.N."/>
            <person name="Woyke T."/>
        </authorList>
    </citation>
    <scope>NUCLEOTIDE SEQUENCE [LARGE SCALE GENOMIC DNA]</scope>
    <source>
        <strain>ATCC BAA-138 / DSM 3043 / CIP 106854 / NCIMB 13768 / 1H11</strain>
    </source>
</reference>
<sequence length="71" mass="8000">MKQAIHPEYKKVTATCSCGATFEFGSTAREDFYVDVCSQCHPFYTGKQKQATTGGRVERFNKRFGAAIKRN</sequence>
<proteinExistence type="inferred from homology"/>
<accession>Q1QZZ2</accession>
<comment type="function">
    <text evidence="1">Binds the 23S rRNA.</text>
</comment>
<comment type="cofactor">
    <cofactor evidence="1">
        <name>Zn(2+)</name>
        <dbReference type="ChEBI" id="CHEBI:29105"/>
    </cofactor>
    <text evidence="1">Binds 1 zinc ion per subunit.</text>
</comment>
<comment type="subunit">
    <text evidence="1">Part of the 50S ribosomal subunit.</text>
</comment>
<comment type="similarity">
    <text evidence="1">Belongs to the bacterial ribosomal protein bL31 family. Type A subfamily.</text>
</comment>
<dbReference type="EMBL" id="CP000285">
    <property type="protein sequence ID" value="ABE57966.1"/>
    <property type="molecule type" value="Genomic_DNA"/>
</dbReference>
<dbReference type="RefSeq" id="WP_011505912.1">
    <property type="nucleotide sequence ID" value="NC_007963.1"/>
</dbReference>
<dbReference type="SMR" id="Q1QZZ2"/>
<dbReference type="STRING" id="290398.Csal_0604"/>
<dbReference type="GeneID" id="95333359"/>
<dbReference type="KEGG" id="csa:Csal_0604"/>
<dbReference type="eggNOG" id="COG0254">
    <property type="taxonomic scope" value="Bacteria"/>
</dbReference>
<dbReference type="HOGENOM" id="CLU_114306_4_3_6"/>
<dbReference type="OrthoDB" id="9803251at2"/>
<dbReference type="Proteomes" id="UP000000239">
    <property type="component" value="Chromosome"/>
</dbReference>
<dbReference type="GO" id="GO:1990904">
    <property type="term" value="C:ribonucleoprotein complex"/>
    <property type="evidence" value="ECO:0007669"/>
    <property type="project" value="UniProtKB-KW"/>
</dbReference>
<dbReference type="GO" id="GO:0005840">
    <property type="term" value="C:ribosome"/>
    <property type="evidence" value="ECO:0007669"/>
    <property type="project" value="UniProtKB-KW"/>
</dbReference>
<dbReference type="GO" id="GO:0046872">
    <property type="term" value="F:metal ion binding"/>
    <property type="evidence" value="ECO:0007669"/>
    <property type="project" value="UniProtKB-KW"/>
</dbReference>
<dbReference type="GO" id="GO:0019843">
    <property type="term" value="F:rRNA binding"/>
    <property type="evidence" value="ECO:0007669"/>
    <property type="project" value="UniProtKB-KW"/>
</dbReference>
<dbReference type="GO" id="GO:0003735">
    <property type="term" value="F:structural constituent of ribosome"/>
    <property type="evidence" value="ECO:0007669"/>
    <property type="project" value="InterPro"/>
</dbReference>
<dbReference type="GO" id="GO:0006412">
    <property type="term" value="P:translation"/>
    <property type="evidence" value="ECO:0007669"/>
    <property type="project" value="UniProtKB-UniRule"/>
</dbReference>
<dbReference type="Gene3D" id="4.10.830.30">
    <property type="entry name" value="Ribosomal protein L31"/>
    <property type="match status" value="1"/>
</dbReference>
<dbReference type="HAMAP" id="MF_00501">
    <property type="entry name" value="Ribosomal_bL31_1"/>
    <property type="match status" value="1"/>
</dbReference>
<dbReference type="InterPro" id="IPR034704">
    <property type="entry name" value="Ribosomal_bL28/bL31-like_sf"/>
</dbReference>
<dbReference type="InterPro" id="IPR002150">
    <property type="entry name" value="Ribosomal_bL31"/>
</dbReference>
<dbReference type="InterPro" id="IPR027491">
    <property type="entry name" value="Ribosomal_bL31_A"/>
</dbReference>
<dbReference type="InterPro" id="IPR042105">
    <property type="entry name" value="Ribosomal_bL31_sf"/>
</dbReference>
<dbReference type="NCBIfam" id="TIGR00105">
    <property type="entry name" value="L31"/>
    <property type="match status" value="1"/>
</dbReference>
<dbReference type="NCBIfam" id="NF000612">
    <property type="entry name" value="PRK00019.1"/>
    <property type="match status" value="1"/>
</dbReference>
<dbReference type="PANTHER" id="PTHR33280">
    <property type="entry name" value="50S RIBOSOMAL PROTEIN L31, CHLOROPLASTIC"/>
    <property type="match status" value="1"/>
</dbReference>
<dbReference type="PANTHER" id="PTHR33280:SF6">
    <property type="entry name" value="LARGE RIBOSOMAL SUBUNIT PROTEIN BL31A"/>
    <property type="match status" value="1"/>
</dbReference>
<dbReference type="Pfam" id="PF01197">
    <property type="entry name" value="Ribosomal_L31"/>
    <property type="match status" value="1"/>
</dbReference>
<dbReference type="PRINTS" id="PR01249">
    <property type="entry name" value="RIBOSOMALL31"/>
</dbReference>
<dbReference type="SUPFAM" id="SSF143800">
    <property type="entry name" value="L28p-like"/>
    <property type="match status" value="1"/>
</dbReference>
<dbReference type="PROSITE" id="PS01143">
    <property type="entry name" value="RIBOSOMAL_L31"/>
    <property type="match status" value="1"/>
</dbReference>
<keyword id="KW-0479">Metal-binding</keyword>
<keyword id="KW-1185">Reference proteome</keyword>
<keyword id="KW-0687">Ribonucleoprotein</keyword>
<keyword id="KW-0689">Ribosomal protein</keyword>
<keyword id="KW-0694">RNA-binding</keyword>
<keyword id="KW-0699">rRNA-binding</keyword>
<keyword id="KW-0862">Zinc</keyword>
<feature type="chain" id="PRO_0000259174" description="Large ribosomal subunit protein bL31">
    <location>
        <begin position="1"/>
        <end position="71"/>
    </location>
</feature>
<feature type="binding site" evidence="1">
    <location>
        <position position="16"/>
    </location>
    <ligand>
        <name>Zn(2+)</name>
        <dbReference type="ChEBI" id="CHEBI:29105"/>
    </ligand>
</feature>
<feature type="binding site" evidence="1">
    <location>
        <position position="18"/>
    </location>
    <ligand>
        <name>Zn(2+)</name>
        <dbReference type="ChEBI" id="CHEBI:29105"/>
    </ligand>
</feature>
<feature type="binding site" evidence="1">
    <location>
        <position position="37"/>
    </location>
    <ligand>
        <name>Zn(2+)</name>
        <dbReference type="ChEBI" id="CHEBI:29105"/>
    </ligand>
</feature>
<feature type="binding site" evidence="1">
    <location>
        <position position="40"/>
    </location>
    <ligand>
        <name>Zn(2+)</name>
        <dbReference type="ChEBI" id="CHEBI:29105"/>
    </ligand>
</feature>
<evidence type="ECO:0000255" key="1">
    <source>
        <dbReference type="HAMAP-Rule" id="MF_00501"/>
    </source>
</evidence>
<evidence type="ECO:0000305" key="2"/>
<name>RL31_CHRSD</name>
<protein>
    <recommendedName>
        <fullName evidence="1">Large ribosomal subunit protein bL31</fullName>
    </recommendedName>
    <alternativeName>
        <fullName evidence="2">50S ribosomal protein L31</fullName>
    </alternativeName>
</protein>